<reference key="1">
    <citation type="journal article" date="2006" name="J. Bacteriol.">
        <title>Comparative genomic analysis of three strains of Ehrlichia ruminantium reveals an active process of genome size plasticity.</title>
        <authorList>
            <person name="Frutos R."/>
            <person name="Viari A."/>
            <person name="Ferraz C."/>
            <person name="Morgat A."/>
            <person name="Eychenie S."/>
            <person name="Kandassamy Y."/>
            <person name="Chantal I."/>
            <person name="Bensaid A."/>
            <person name="Coissac E."/>
            <person name="Vachiery N."/>
            <person name="Demaille J."/>
            <person name="Martinez D."/>
        </authorList>
    </citation>
    <scope>NUCLEOTIDE SEQUENCE [LARGE SCALE GENOMIC DNA]</scope>
    <source>
        <strain>Gardel</strain>
    </source>
</reference>
<accession>Q5FG39</accession>
<evidence type="ECO:0000255" key="1">
    <source>
        <dbReference type="HAMAP-Rule" id="MF_00016"/>
    </source>
</evidence>
<name>RUVB_EHRRG</name>
<sequence length="331" mass="37384">MFMKDILQSSECIEDQQNISMRPNLLDEFIGQSSVVSNLKIFIDAAYERKEPIDHILLYGPPGLGKTTLAHIIAKELKVNFRSTAGPLLSKAGDLAAILTNLQARDVLFIDEIHRLNRNIEEILYSAMEDFSLDIIVGEGCGARTLRVDIPPFTLIGATTRIGLLSNPLRDRFGIPMHLEFYSTEELTKVIKRAAKVIHTNISNNGAEEISLRSRGTPRIALRLLRRIRDFISVTKQDTITHEFADQALLRLGIDKLGLDRQDIKYLQFIYEANNPIGIDTISSALSEDTGNIEETIEPYLIKINFIQRTPRGRVITQKAISYLNEQTYNM</sequence>
<gene>
    <name evidence="1" type="primary">ruvB</name>
    <name type="ordered locus">ERGA_CDS_07020</name>
</gene>
<comment type="function">
    <text evidence="1">The RuvA-RuvB-RuvC complex processes Holliday junction (HJ) DNA during genetic recombination and DNA repair, while the RuvA-RuvB complex plays an important role in the rescue of blocked DNA replication forks via replication fork reversal (RFR). RuvA specifically binds to HJ cruciform DNA, conferring on it an open structure. The RuvB hexamer acts as an ATP-dependent pump, pulling dsDNA into and through the RuvAB complex. RuvB forms 2 homohexamers on either side of HJ DNA bound by 1 or 2 RuvA tetramers; 4 subunits per hexamer contact DNA at a time. Coordinated motions by a converter formed by DNA-disengaged RuvB subunits stimulates ATP hydrolysis and nucleotide exchange. Immobilization of the converter enables RuvB to convert the ATP-contained energy into a lever motion, pulling 2 nucleotides of DNA out of the RuvA tetramer per ATP hydrolyzed, thus driving DNA branch migration. The RuvB motors rotate together with the DNA substrate, which together with the progressing nucleotide cycle form the mechanistic basis for DNA recombination by continuous HJ branch migration. Branch migration allows RuvC to scan DNA until it finds its consensus sequence, where it cleaves and resolves cruciform DNA.</text>
</comment>
<comment type="catalytic activity">
    <reaction evidence="1">
        <text>ATP + H2O = ADP + phosphate + H(+)</text>
        <dbReference type="Rhea" id="RHEA:13065"/>
        <dbReference type="ChEBI" id="CHEBI:15377"/>
        <dbReference type="ChEBI" id="CHEBI:15378"/>
        <dbReference type="ChEBI" id="CHEBI:30616"/>
        <dbReference type="ChEBI" id="CHEBI:43474"/>
        <dbReference type="ChEBI" id="CHEBI:456216"/>
    </reaction>
</comment>
<comment type="subunit">
    <text evidence="1">Homohexamer. Forms an RuvA(8)-RuvB(12)-Holliday junction (HJ) complex. HJ DNA is sandwiched between 2 RuvA tetramers; dsDNA enters through RuvA and exits via RuvB. An RuvB hexamer assembles on each DNA strand where it exits the tetramer. Each RuvB hexamer is contacted by two RuvA subunits (via domain III) on 2 adjacent RuvB subunits; this complex drives branch migration. In the full resolvosome a probable DNA-RuvA(4)-RuvB(12)-RuvC(2) complex forms which resolves the HJ.</text>
</comment>
<comment type="subcellular location">
    <subcellularLocation>
        <location evidence="1">Cytoplasm</location>
    </subcellularLocation>
</comment>
<comment type="domain">
    <text evidence="1">Has 3 domains, the large (RuvB-L) and small ATPase (RuvB-S) domains and the C-terminal head (RuvB-H) domain. The head domain binds DNA, while the ATPase domains jointly bind ATP, ADP or are empty depending on the state of the subunit in the translocation cycle. During a single DNA translocation step the structure of each domain remains the same, but their relative positions change.</text>
</comment>
<comment type="similarity">
    <text evidence="1">Belongs to the RuvB family.</text>
</comment>
<keyword id="KW-0067">ATP-binding</keyword>
<keyword id="KW-0963">Cytoplasm</keyword>
<keyword id="KW-0227">DNA damage</keyword>
<keyword id="KW-0233">DNA recombination</keyword>
<keyword id="KW-0234">DNA repair</keyword>
<keyword id="KW-0238">DNA-binding</keyword>
<keyword id="KW-0378">Hydrolase</keyword>
<keyword id="KW-0547">Nucleotide-binding</keyword>
<dbReference type="EC" id="3.6.4.-" evidence="1"/>
<dbReference type="EMBL" id="CR925677">
    <property type="protein sequence ID" value="CAI28154.1"/>
    <property type="molecule type" value="Genomic_DNA"/>
</dbReference>
<dbReference type="SMR" id="Q5FG39"/>
<dbReference type="KEGG" id="erg:ERGA_CDS_07020"/>
<dbReference type="HOGENOM" id="CLU_055599_1_0_5"/>
<dbReference type="Proteomes" id="UP000000533">
    <property type="component" value="Chromosome"/>
</dbReference>
<dbReference type="GO" id="GO:0005737">
    <property type="term" value="C:cytoplasm"/>
    <property type="evidence" value="ECO:0007669"/>
    <property type="project" value="UniProtKB-SubCell"/>
</dbReference>
<dbReference type="GO" id="GO:0048476">
    <property type="term" value="C:Holliday junction resolvase complex"/>
    <property type="evidence" value="ECO:0007669"/>
    <property type="project" value="UniProtKB-UniRule"/>
</dbReference>
<dbReference type="GO" id="GO:0005524">
    <property type="term" value="F:ATP binding"/>
    <property type="evidence" value="ECO:0007669"/>
    <property type="project" value="UniProtKB-UniRule"/>
</dbReference>
<dbReference type="GO" id="GO:0016887">
    <property type="term" value="F:ATP hydrolysis activity"/>
    <property type="evidence" value="ECO:0007669"/>
    <property type="project" value="InterPro"/>
</dbReference>
<dbReference type="GO" id="GO:0000400">
    <property type="term" value="F:four-way junction DNA binding"/>
    <property type="evidence" value="ECO:0007669"/>
    <property type="project" value="UniProtKB-UniRule"/>
</dbReference>
<dbReference type="GO" id="GO:0009378">
    <property type="term" value="F:four-way junction helicase activity"/>
    <property type="evidence" value="ECO:0007669"/>
    <property type="project" value="InterPro"/>
</dbReference>
<dbReference type="GO" id="GO:0006310">
    <property type="term" value="P:DNA recombination"/>
    <property type="evidence" value="ECO:0007669"/>
    <property type="project" value="UniProtKB-UniRule"/>
</dbReference>
<dbReference type="GO" id="GO:0006281">
    <property type="term" value="P:DNA repair"/>
    <property type="evidence" value="ECO:0007669"/>
    <property type="project" value="UniProtKB-UniRule"/>
</dbReference>
<dbReference type="CDD" id="cd00009">
    <property type="entry name" value="AAA"/>
    <property type="match status" value="1"/>
</dbReference>
<dbReference type="Gene3D" id="1.10.8.60">
    <property type="match status" value="1"/>
</dbReference>
<dbReference type="Gene3D" id="3.40.50.300">
    <property type="entry name" value="P-loop containing nucleotide triphosphate hydrolases"/>
    <property type="match status" value="1"/>
</dbReference>
<dbReference type="Gene3D" id="1.10.10.10">
    <property type="entry name" value="Winged helix-like DNA-binding domain superfamily/Winged helix DNA-binding domain"/>
    <property type="match status" value="1"/>
</dbReference>
<dbReference type="HAMAP" id="MF_00016">
    <property type="entry name" value="DNA_HJ_migration_RuvB"/>
    <property type="match status" value="1"/>
</dbReference>
<dbReference type="InterPro" id="IPR003593">
    <property type="entry name" value="AAA+_ATPase"/>
</dbReference>
<dbReference type="InterPro" id="IPR041445">
    <property type="entry name" value="AAA_lid_4"/>
</dbReference>
<dbReference type="InterPro" id="IPR004605">
    <property type="entry name" value="DNA_helicase_Holl-junc_RuvB"/>
</dbReference>
<dbReference type="InterPro" id="IPR027417">
    <property type="entry name" value="P-loop_NTPase"/>
</dbReference>
<dbReference type="InterPro" id="IPR008824">
    <property type="entry name" value="RuvB-like_N"/>
</dbReference>
<dbReference type="InterPro" id="IPR008823">
    <property type="entry name" value="RuvB_C"/>
</dbReference>
<dbReference type="InterPro" id="IPR036388">
    <property type="entry name" value="WH-like_DNA-bd_sf"/>
</dbReference>
<dbReference type="InterPro" id="IPR036390">
    <property type="entry name" value="WH_DNA-bd_sf"/>
</dbReference>
<dbReference type="NCBIfam" id="NF000868">
    <property type="entry name" value="PRK00080.1"/>
    <property type="match status" value="1"/>
</dbReference>
<dbReference type="NCBIfam" id="TIGR00635">
    <property type="entry name" value="ruvB"/>
    <property type="match status" value="1"/>
</dbReference>
<dbReference type="PANTHER" id="PTHR42848">
    <property type="match status" value="1"/>
</dbReference>
<dbReference type="PANTHER" id="PTHR42848:SF1">
    <property type="entry name" value="HOLLIDAY JUNCTION BRANCH MIGRATION COMPLEX SUBUNIT RUVB"/>
    <property type="match status" value="1"/>
</dbReference>
<dbReference type="Pfam" id="PF17864">
    <property type="entry name" value="AAA_lid_4"/>
    <property type="match status" value="1"/>
</dbReference>
<dbReference type="Pfam" id="PF05491">
    <property type="entry name" value="RuvB_C"/>
    <property type="match status" value="1"/>
</dbReference>
<dbReference type="Pfam" id="PF05496">
    <property type="entry name" value="RuvB_N"/>
    <property type="match status" value="1"/>
</dbReference>
<dbReference type="SMART" id="SM00382">
    <property type="entry name" value="AAA"/>
    <property type="match status" value="1"/>
</dbReference>
<dbReference type="SUPFAM" id="SSF52540">
    <property type="entry name" value="P-loop containing nucleoside triphosphate hydrolases"/>
    <property type="match status" value="1"/>
</dbReference>
<dbReference type="SUPFAM" id="SSF46785">
    <property type="entry name" value="Winged helix' DNA-binding domain"/>
    <property type="match status" value="1"/>
</dbReference>
<feature type="chain" id="PRO_0000235367" description="Holliday junction branch migration complex subunit RuvB">
    <location>
        <begin position="1"/>
        <end position="331"/>
    </location>
</feature>
<feature type="region of interest" description="Large ATPase domain (RuvB-L)" evidence="1">
    <location>
        <begin position="4"/>
        <end position="182"/>
    </location>
</feature>
<feature type="region of interest" description="Small ATPAse domain (RuvB-S)" evidence="1">
    <location>
        <begin position="183"/>
        <end position="253"/>
    </location>
</feature>
<feature type="region of interest" description="Head domain (RuvB-H)" evidence="1">
    <location>
        <begin position="256"/>
        <end position="331"/>
    </location>
</feature>
<feature type="binding site" evidence="1">
    <location>
        <position position="22"/>
    </location>
    <ligand>
        <name>ATP</name>
        <dbReference type="ChEBI" id="CHEBI:30616"/>
    </ligand>
</feature>
<feature type="binding site" evidence="1">
    <location>
        <position position="63"/>
    </location>
    <ligand>
        <name>ATP</name>
        <dbReference type="ChEBI" id="CHEBI:30616"/>
    </ligand>
</feature>
<feature type="binding site" evidence="1">
    <location>
        <position position="66"/>
    </location>
    <ligand>
        <name>ATP</name>
        <dbReference type="ChEBI" id="CHEBI:30616"/>
    </ligand>
</feature>
<feature type="binding site" evidence="1">
    <location>
        <position position="67"/>
    </location>
    <ligand>
        <name>ATP</name>
        <dbReference type="ChEBI" id="CHEBI:30616"/>
    </ligand>
</feature>
<feature type="binding site" evidence="1">
    <location>
        <position position="67"/>
    </location>
    <ligand>
        <name>Mg(2+)</name>
        <dbReference type="ChEBI" id="CHEBI:18420"/>
    </ligand>
</feature>
<feature type="binding site" evidence="1">
    <location>
        <position position="68"/>
    </location>
    <ligand>
        <name>ATP</name>
        <dbReference type="ChEBI" id="CHEBI:30616"/>
    </ligand>
</feature>
<feature type="binding site" evidence="1">
    <location>
        <begin position="129"/>
        <end position="131"/>
    </location>
    <ligand>
        <name>ATP</name>
        <dbReference type="ChEBI" id="CHEBI:30616"/>
    </ligand>
</feature>
<feature type="binding site" evidence="1">
    <location>
        <position position="172"/>
    </location>
    <ligand>
        <name>ATP</name>
        <dbReference type="ChEBI" id="CHEBI:30616"/>
    </ligand>
</feature>
<feature type="binding site" evidence="1">
    <location>
        <position position="182"/>
    </location>
    <ligand>
        <name>ATP</name>
        <dbReference type="ChEBI" id="CHEBI:30616"/>
    </ligand>
</feature>
<feature type="binding site" evidence="1">
    <location>
        <position position="219"/>
    </location>
    <ligand>
        <name>ATP</name>
        <dbReference type="ChEBI" id="CHEBI:30616"/>
    </ligand>
</feature>
<feature type="binding site" evidence="1">
    <location>
        <position position="309"/>
    </location>
    <ligand>
        <name>DNA</name>
        <dbReference type="ChEBI" id="CHEBI:16991"/>
    </ligand>
</feature>
<feature type="binding site" evidence="1">
    <location>
        <position position="314"/>
    </location>
    <ligand>
        <name>DNA</name>
        <dbReference type="ChEBI" id="CHEBI:16991"/>
    </ligand>
</feature>
<protein>
    <recommendedName>
        <fullName evidence="1">Holliday junction branch migration complex subunit RuvB</fullName>
        <ecNumber evidence="1">3.6.4.-</ecNumber>
    </recommendedName>
</protein>
<organism>
    <name type="scientific">Ehrlichia ruminantium (strain Gardel)</name>
    <dbReference type="NCBI Taxonomy" id="302409"/>
    <lineage>
        <taxon>Bacteria</taxon>
        <taxon>Pseudomonadati</taxon>
        <taxon>Pseudomonadota</taxon>
        <taxon>Alphaproteobacteria</taxon>
        <taxon>Rickettsiales</taxon>
        <taxon>Anaplasmataceae</taxon>
        <taxon>Ehrlichia</taxon>
    </lineage>
</organism>
<proteinExistence type="inferred from homology"/>